<gene>
    <name type="primary">cpcD</name>
    <name type="ordered locus">asr0531</name>
</gene>
<accession>P07124</accession>
<keyword id="KW-0042">Antenna complex</keyword>
<keyword id="KW-0903">Direct protein sequencing</keyword>
<keyword id="KW-0472">Membrane</keyword>
<keyword id="KW-0602">Photosynthesis</keyword>
<keyword id="KW-0605">Phycobilisome</keyword>
<keyword id="KW-1185">Reference proteome</keyword>
<keyword id="KW-0793">Thylakoid</keyword>
<proteinExistence type="evidence at protein level"/>
<feature type="initiator methionine" description="Removed" evidence="3">
    <location>
        <position position="1"/>
    </location>
</feature>
<feature type="chain" id="PRO_0000199230" description="Phycobilisome 8.9 kDa linker polypeptide, phycocyanin-associated, rod">
    <location>
        <begin position="2"/>
        <end position="80"/>
    </location>
</feature>
<feature type="domain" description="CpcD-like" evidence="2">
    <location>
        <begin position="17"/>
        <end position="75"/>
    </location>
</feature>
<evidence type="ECO:0000250" key="1"/>
<evidence type="ECO:0000255" key="2">
    <source>
        <dbReference type="PROSITE-ProRule" id="PRU00771"/>
    </source>
</evidence>
<evidence type="ECO:0000269" key="3">
    <source>
    </source>
</evidence>
<evidence type="ECO:0000305" key="4"/>
<sequence length="80" mass="8895">MFGQTTLGAGSVSSSASRVFRYEVVGLRQSSETDKNKYNIRNSGSVFITVPYSRMNEEYQRITRLGGKIVKIEQLVSAEA</sequence>
<reference key="1">
    <citation type="journal article" date="1987" name="EMBO J.">
        <title>Cloning and light regulation of expression of the phycocyanin operon of the cyanobacterium Anabaena.</title>
        <authorList>
            <person name="Belknap W.R."/>
            <person name="Haselkorn R."/>
        </authorList>
    </citation>
    <scope>NUCLEOTIDE SEQUENCE [GENOMIC DNA]</scope>
</reference>
<reference key="2">
    <citation type="journal article" date="2001" name="Anal. Biochem.">
        <title>Recombinant phycobiliproteins. Recombinant C-phycocyanins equipped with affinity tags, oligomerization, and biospecific recognition domains.</title>
        <authorList>
            <person name="Cai Y.A."/>
            <person name="Murphy J.T."/>
            <person name="Wedemayer G.J."/>
            <person name="Glazer A.N."/>
        </authorList>
    </citation>
    <scope>NUCLEOTIDE SEQUENCE [GENOMIC DNA]</scope>
</reference>
<reference key="3">
    <citation type="journal article" date="2001" name="DNA Res.">
        <title>Complete genomic sequence of the filamentous nitrogen-fixing cyanobacterium Anabaena sp. strain PCC 7120.</title>
        <authorList>
            <person name="Kaneko T."/>
            <person name="Nakamura Y."/>
            <person name="Wolk C.P."/>
            <person name="Kuritz T."/>
            <person name="Sasamoto S."/>
            <person name="Watanabe A."/>
            <person name="Iriguchi M."/>
            <person name="Ishikawa A."/>
            <person name="Kawashima K."/>
            <person name="Kimura T."/>
            <person name="Kishida Y."/>
            <person name="Kohara M."/>
            <person name="Matsumoto M."/>
            <person name="Matsuno A."/>
            <person name="Muraki A."/>
            <person name="Nakazaki N."/>
            <person name="Shimpo S."/>
            <person name="Sugimoto M."/>
            <person name="Takazawa M."/>
            <person name="Yamada M."/>
            <person name="Yasuda M."/>
            <person name="Tabata S."/>
        </authorList>
    </citation>
    <scope>NUCLEOTIDE SEQUENCE [LARGE SCALE GENOMIC DNA]</scope>
    <source>
        <strain>PCC 7120 / SAG 25.82 / UTEX 2576</strain>
    </source>
</reference>
<reference key="4">
    <citation type="journal article" date="2014" name="Proc. Natl. Acad. Sci. U.S.A.">
        <title>Attachment of phycobilisomes in an antenna-photosystem I supercomplex of cyanobacteria.</title>
        <authorList>
            <person name="Watanabe M."/>
            <person name="Semchonok D.A."/>
            <person name="Webber-Birungi M.T."/>
            <person name="Ehira S."/>
            <person name="Kondo K."/>
            <person name="Narikawa R."/>
            <person name="Ohmori M."/>
            <person name="Boekema E.J."/>
            <person name="Ikeuchi M."/>
        </authorList>
    </citation>
    <scope>PROTEIN SEQUENCE OF 2-15</scope>
    <scope>SUBUNIT</scope>
    <scope>SUBCELLULAR LOCATION</scope>
    <source>
        <strain>PCC 7120 / SAG 25.82 / UTEX 2576</strain>
    </source>
</reference>
<name>PYS1_NOSS1</name>
<comment type="function">
    <text>Rod linker protein, associated with phycocyanin. Linker polypeptides determine the state of aggregation and the location of the disk-shaped phycobiliprotein units within the phycobilisome and modulate their spectroscopic properties in order to mediate a directed and optimal energy transfer.</text>
</comment>
<comment type="subunit">
    <text evidence="3">Associated with the phycobilisome, a hemidiscoidal structure that is composed of two distinct substructures: a core complex and a number of rods radiating from the core.</text>
</comment>
<comment type="subcellular location">
    <subcellularLocation>
        <location evidence="3">Cellular thylakoid membrane</location>
        <topology evidence="1">Peripheral membrane protein</topology>
        <orientation evidence="1">Cytoplasmic side</orientation>
    </subcellularLocation>
    <text evidence="3 4">This protein occurs in the rod, it is associated with phycocyanin.</text>
</comment>
<comment type="similarity">
    <text evidence="4">Belongs to the phycobilisome linker protein family.</text>
</comment>
<organism>
    <name type="scientific">Nostoc sp. (strain PCC 7120 / SAG 25.82 / UTEX 2576)</name>
    <dbReference type="NCBI Taxonomy" id="103690"/>
    <lineage>
        <taxon>Bacteria</taxon>
        <taxon>Bacillati</taxon>
        <taxon>Cyanobacteriota</taxon>
        <taxon>Cyanophyceae</taxon>
        <taxon>Nostocales</taxon>
        <taxon>Nostocaceae</taxon>
        <taxon>Nostoc</taxon>
    </lineage>
</organism>
<protein>
    <recommendedName>
        <fullName>Phycobilisome 8.9 kDa linker polypeptide, phycocyanin-associated, rod</fullName>
        <shortName>L-8.9/R</shortName>
    </recommendedName>
    <alternativeName>
        <fullName>Rod-capping linker protein</fullName>
    </alternativeName>
</protein>
<dbReference type="EMBL" id="X05239">
    <property type="protein sequence ID" value="CAA28865.1"/>
    <property type="molecule type" value="Genomic_DNA"/>
</dbReference>
<dbReference type="EMBL" id="AF178757">
    <property type="protein sequence ID" value="AAG09319.1"/>
    <property type="molecule type" value="Genomic_DNA"/>
</dbReference>
<dbReference type="EMBL" id="BA000019">
    <property type="protein sequence ID" value="BAB72489.1"/>
    <property type="molecule type" value="Genomic_DNA"/>
</dbReference>
<dbReference type="PIR" id="AB1873">
    <property type="entry name" value="AB1873"/>
</dbReference>
<dbReference type="RefSeq" id="WP_010994707.1">
    <property type="nucleotide sequence ID" value="NZ_RSCN01000059.1"/>
</dbReference>
<dbReference type="SMR" id="P07124"/>
<dbReference type="STRING" id="103690.gene:10492542"/>
<dbReference type="KEGG" id="ana:asr0531"/>
<dbReference type="eggNOG" id="COG0369">
    <property type="taxonomic scope" value="Bacteria"/>
</dbReference>
<dbReference type="OrthoDB" id="574405at2"/>
<dbReference type="Proteomes" id="UP000002483">
    <property type="component" value="Chromosome"/>
</dbReference>
<dbReference type="GO" id="GO:0030089">
    <property type="term" value="C:phycobilisome"/>
    <property type="evidence" value="ECO:0007669"/>
    <property type="project" value="UniProtKB-KW"/>
</dbReference>
<dbReference type="GO" id="GO:0031676">
    <property type="term" value="C:plasma membrane-derived thylakoid membrane"/>
    <property type="evidence" value="ECO:0007669"/>
    <property type="project" value="UniProtKB-SubCell"/>
</dbReference>
<dbReference type="GO" id="GO:0015979">
    <property type="term" value="P:photosynthesis"/>
    <property type="evidence" value="ECO:0007669"/>
    <property type="project" value="UniProtKB-KW"/>
</dbReference>
<dbReference type="InterPro" id="IPR011064">
    <property type="entry name" value="Allophyco_linker_chain"/>
</dbReference>
<dbReference type="InterPro" id="IPR008213">
    <property type="entry name" value="CpcD-like_dom"/>
</dbReference>
<dbReference type="Pfam" id="PF01383">
    <property type="entry name" value="CpcD"/>
    <property type="match status" value="1"/>
</dbReference>
<dbReference type="SMART" id="SM01094">
    <property type="entry name" value="CpcD"/>
    <property type="match status" value="1"/>
</dbReference>
<dbReference type="SUPFAM" id="SSF54580">
    <property type="entry name" value="Allophycocyanin linker chain (domain)"/>
    <property type="match status" value="1"/>
</dbReference>
<dbReference type="PROSITE" id="PS51441">
    <property type="entry name" value="CPCD_LIKE"/>
    <property type="match status" value="1"/>
</dbReference>